<comment type="function">
    <text evidence="1">This protein is located at the 30S-50S ribosomal subunit interface and may play a role in the structure and function of the aminoacyl-tRNA binding site.</text>
</comment>
<comment type="similarity">
    <text evidence="1">Belongs to the bacterial ribosomal protein bL19 family.</text>
</comment>
<keyword id="KW-0687">Ribonucleoprotein</keyword>
<keyword id="KW-0689">Ribosomal protein</keyword>
<feature type="chain" id="PRO_1000049648" description="Large ribosomal subunit protein bL19">
    <location>
        <begin position="1"/>
        <end position="129"/>
    </location>
</feature>
<proteinExistence type="inferred from homology"/>
<organism>
    <name type="scientific">Burkholderia pseudomallei (strain 668)</name>
    <dbReference type="NCBI Taxonomy" id="320373"/>
    <lineage>
        <taxon>Bacteria</taxon>
        <taxon>Pseudomonadati</taxon>
        <taxon>Pseudomonadota</taxon>
        <taxon>Betaproteobacteria</taxon>
        <taxon>Burkholderiales</taxon>
        <taxon>Burkholderiaceae</taxon>
        <taxon>Burkholderia</taxon>
        <taxon>pseudomallei group</taxon>
    </lineage>
</organism>
<dbReference type="EMBL" id="CP000570">
    <property type="protein sequence ID" value="ABN84475.1"/>
    <property type="molecule type" value="Genomic_DNA"/>
</dbReference>
<dbReference type="RefSeq" id="WP_004189360.1">
    <property type="nucleotide sequence ID" value="NC_009074.1"/>
</dbReference>
<dbReference type="SMR" id="A3NC04"/>
<dbReference type="GeneID" id="93061076"/>
<dbReference type="KEGG" id="bpd:BURPS668_2856"/>
<dbReference type="HOGENOM" id="CLU_103507_1_0_4"/>
<dbReference type="GO" id="GO:0022625">
    <property type="term" value="C:cytosolic large ribosomal subunit"/>
    <property type="evidence" value="ECO:0007669"/>
    <property type="project" value="TreeGrafter"/>
</dbReference>
<dbReference type="GO" id="GO:0003735">
    <property type="term" value="F:structural constituent of ribosome"/>
    <property type="evidence" value="ECO:0007669"/>
    <property type="project" value="InterPro"/>
</dbReference>
<dbReference type="GO" id="GO:0006412">
    <property type="term" value="P:translation"/>
    <property type="evidence" value="ECO:0007669"/>
    <property type="project" value="UniProtKB-UniRule"/>
</dbReference>
<dbReference type="FunFam" id="2.30.30.790:FF:000001">
    <property type="entry name" value="50S ribosomal protein L19"/>
    <property type="match status" value="1"/>
</dbReference>
<dbReference type="Gene3D" id="2.30.30.790">
    <property type="match status" value="1"/>
</dbReference>
<dbReference type="HAMAP" id="MF_00402">
    <property type="entry name" value="Ribosomal_bL19"/>
    <property type="match status" value="1"/>
</dbReference>
<dbReference type="InterPro" id="IPR001857">
    <property type="entry name" value="Ribosomal_bL19"/>
</dbReference>
<dbReference type="InterPro" id="IPR018257">
    <property type="entry name" value="Ribosomal_bL19_CS"/>
</dbReference>
<dbReference type="InterPro" id="IPR038657">
    <property type="entry name" value="Ribosomal_bL19_sf"/>
</dbReference>
<dbReference type="InterPro" id="IPR008991">
    <property type="entry name" value="Translation_prot_SH3-like_sf"/>
</dbReference>
<dbReference type="NCBIfam" id="TIGR01024">
    <property type="entry name" value="rplS_bact"/>
    <property type="match status" value="1"/>
</dbReference>
<dbReference type="PANTHER" id="PTHR15680:SF9">
    <property type="entry name" value="LARGE RIBOSOMAL SUBUNIT PROTEIN BL19M"/>
    <property type="match status" value="1"/>
</dbReference>
<dbReference type="PANTHER" id="PTHR15680">
    <property type="entry name" value="RIBOSOMAL PROTEIN L19"/>
    <property type="match status" value="1"/>
</dbReference>
<dbReference type="Pfam" id="PF01245">
    <property type="entry name" value="Ribosomal_L19"/>
    <property type="match status" value="1"/>
</dbReference>
<dbReference type="PIRSF" id="PIRSF002191">
    <property type="entry name" value="Ribosomal_L19"/>
    <property type="match status" value="1"/>
</dbReference>
<dbReference type="PRINTS" id="PR00061">
    <property type="entry name" value="RIBOSOMALL19"/>
</dbReference>
<dbReference type="SUPFAM" id="SSF50104">
    <property type="entry name" value="Translation proteins SH3-like domain"/>
    <property type="match status" value="1"/>
</dbReference>
<dbReference type="PROSITE" id="PS01015">
    <property type="entry name" value="RIBOSOMAL_L19"/>
    <property type="match status" value="1"/>
</dbReference>
<gene>
    <name evidence="1" type="primary">rplS</name>
    <name type="ordered locus">BURPS668_2856</name>
</gene>
<name>RL19_BURP6</name>
<sequence length="129" mass="14429">MNLIAKLEQEEIERALAGKTIPEFAPGDTVIVNVNVVEGNRKRVQAYEGVVIAKRNRGLNSSFIVRKISSGEGVERTFQTYSPLLASIVVKRRGDVRRAKLYYLRERSGKSARIKEKLVSKDRAAAAQQ</sequence>
<reference key="1">
    <citation type="journal article" date="2010" name="Genome Biol. Evol.">
        <title>Continuing evolution of Burkholderia mallei through genome reduction and large-scale rearrangements.</title>
        <authorList>
            <person name="Losada L."/>
            <person name="Ronning C.M."/>
            <person name="DeShazer D."/>
            <person name="Woods D."/>
            <person name="Fedorova N."/>
            <person name="Kim H.S."/>
            <person name="Shabalina S.A."/>
            <person name="Pearson T.R."/>
            <person name="Brinkac L."/>
            <person name="Tan P."/>
            <person name="Nandi T."/>
            <person name="Crabtree J."/>
            <person name="Badger J."/>
            <person name="Beckstrom-Sternberg S."/>
            <person name="Saqib M."/>
            <person name="Schutzer S.E."/>
            <person name="Keim P."/>
            <person name="Nierman W.C."/>
        </authorList>
    </citation>
    <scope>NUCLEOTIDE SEQUENCE [LARGE SCALE GENOMIC DNA]</scope>
    <source>
        <strain>668</strain>
    </source>
</reference>
<accession>A3NC04</accession>
<protein>
    <recommendedName>
        <fullName evidence="1">Large ribosomal subunit protein bL19</fullName>
    </recommendedName>
    <alternativeName>
        <fullName evidence="2">50S ribosomal protein L19</fullName>
    </alternativeName>
</protein>
<evidence type="ECO:0000255" key="1">
    <source>
        <dbReference type="HAMAP-Rule" id="MF_00402"/>
    </source>
</evidence>
<evidence type="ECO:0000305" key="2"/>